<accession>Q45982</accession>
<gene>
    <name type="primary">ptmB</name>
</gene>
<evidence type="ECO:0000305" key="1"/>
<comment type="function">
    <text>Required for biosynthesis of LAH modification in the post-translational modification of Campylobacter coli flagellin.</text>
</comment>
<comment type="similarity">
    <text evidence="1">Belongs to the CMP-NeuNAc synthase family.</text>
</comment>
<protein>
    <recommendedName>
        <fullName>Post-translational flagellin modification protein B</fullName>
    </recommendedName>
</protein>
<name>PTMB_CAMCO</name>
<sequence length="235" mass="26601">MSEILCTICARGGSKGVKNKNIRKINDLEMIAYSIIQAKNSKLFKHIVISTDSEEIAKIALKYGGEVFFKREAHLASDTAAKIPVMRDALLRSEEYFKCQFDTLIDLDASAPLRSSADIIKAFETFCQNQNDNLITAVPARRNPYFNLIEVQDGKVVKSKSGNFTTRQSVPKCYDMNASIYIFKRDFLLQNDSVFGKNTGLFIMDESTAFDVDSELDFKIVEFLIKEKNLQAKDF</sequence>
<feature type="chain" id="PRO_0000213210" description="Post-translational flagellin modification protein B">
    <location>
        <begin position="1"/>
        <end position="235"/>
    </location>
</feature>
<reference key="1">
    <citation type="journal article" date="1996" name="Mol. Microbiol.">
        <title>Identification and characterization of genes required for post-translational modification of Campylobacter coli VC167 flagellin.</title>
        <authorList>
            <person name="Guerry P."/>
            <person name="Doig P."/>
            <person name="Alm R.A."/>
            <person name="Burr D.H."/>
            <person name="Kinsella N."/>
            <person name="Trust T.J."/>
        </authorList>
    </citation>
    <scope>NUCLEOTIDE SEQUENCE [GENOMIC DNA]</scope>
    <source>
        <strain>VC167</strain>
    </source>
</reference>
<organism>
    <name type="scientific">Campylobacter coli</name>
    <dbReference type="NCBI Taxonomy" id="195"/>
    <lineage>
        <taxon>Bacteria</taxon>
        <taxon>Pseudomonadati</taxon>
        <taxon>Campylobacterota</taxon>
        <taxon>Epsilonproteobacteria</taxon>
        <taxon>Campylobacterales</taxon>
        <taxon>Campylobacteraceae</taxon>
        <taxon>Campylobacter</taxon>
    </lineage>
</organism>
<proteinExistence type="inferred from homology"/>
<dbReference type="EMBL" id="AY102621">
    <property type="protein sequence ID" value="AAM76281.1"/>
    <property type="molecule type" value="Genomic_DNA"/>
</dbReference>
<dbReference type="PIR" id="S70685">
    <property type="entry name" value="S70685"/>
</dbReference>
<dbReference type="RefSeq" id="WP_002838724.1">
    <property type="nucleotide sequence ID" value="NZ_VEWG01000014.1"/>
</dbReference>
<dbReference type="SMR" id="Q45982"/>
<dbReference type="STRING" id="195.ATE51_00902"/>
<dbReference type="KEGG" id="ccof:VC76_06680"/>
<dbReference type="PATRIC" id="fig|195.282.peg.1324"/>
<dbReference type="eggNOG" id="COG1083">
    <property type="taxonomic scope" value="Bacteria"/>
</dbReference>
<dbReference type="GO" id="GO:0008781">
    <property type="term" value="F:N-acylneuraminate cytidylyltransferase activity"/>
    <property type="evidence" value="ECO:0007669"/>
    <property type="project" value="TreeGrafter"/>
</dbReference>
<dbReference type="CDD" id="cd02513">
    <property type="entry name" value="CMP-NeuAc_Synthase"/>
    <property type="match status" value="1"/>
</dbReference>
<dbReference type="Gene3D" id="3.90.550.10">
    <property type="entry name" value="Spore Coat Polysaccharide Biosynthesis Protein SpsA, Chain A"/>
    <property type="match status" value="1"/>
</dbReference>
<dbReference type="InterPro" id="IPR050793">
    <property type="entry name" value="CMP-NeuNAc_synthase"/>
</dbReference>
<dbReference type="InterPro" id="IPR003329">
    <property type="entry name" value="Cytidylyl_trans"/>
</dbReference>
<dbReference type="InterPro" id="IPR029044">
    <property type="entry name" value="Nucleotide-diphossugar_trans"/>
</dbReference>
<dbReference type="PANTHER" id="PTHR21485">
    <property type="entry name" value="HAD SUPERFAMILY MEMBERS CMAS AND KDSC"/>
    <property type="match status" value="1"/>
</dbReference>
<dbReference type="PANTHER" id="PTHR21485:SF6">
    <property type="entry name" value="N-ACYLNEURAMINATE CYTIDYLYLTRANSFERASE-RELATED"/>
    <property type="match status" value="1"/>
</dbReference>
<dbReference type="Pfam" id="PF02348">
    <property type="entry name" value="CTP_transf_3"/>
    <property type="match status" value="1"/>
</dbReference>
<dbReference type="SUPFAM" id="SSF53448">
    <property type="entry name" value="Nucleotide-diphospho-sugar transferases"/>
    <property type="match status" value="1"/>
</dbReference>